<gene>
    <name type="primary">ACT1</name>
    <name type="synonym">AAC1</name>
    <name type="ordered locus">At2g37620</name>
    <name type="ORF">F13M22.12</name>
</gene>
<sequence length="377" mass="41798">MADGEDIQPLVCDNGTGMVKAGFAGDDAPRAVFPSIVGRPRHTGVMVGMGQKDAYVGDEAQSKRGILTLKYPIEHGIVNNWDDMEKIWHHTFYNELRVAPEEHPILLTEAPLNPKANREKMTQIMFETFNAPAMYVAIQAVLSLYASGRTTGIVLDSGDGVSHTVPIYEGYALPHAILRLDLAGRDLTDALMKILTERGYSFTTTAEREIVRDIKEKLCYIALDYEQELETAKTSSSVEKNYELPDGQVITIGSERFRCPEVLYQPSMIGMENAGIHETTYNSIMKCDVDIRKDLYGNIVLSGGTTMFPGIADRMSKEITALAPSSMKIKVVAPPERKYSVWIGGSILASLSTFQQMWIAKAEYDESGPSIVHRKCF</sequence>
<feature type="initiator methionine" description="Removed" evidence="2">
    <location>
        <position position="1"/>
    </location>
</feature>
<feature type="chain" id="PRO_0000088888" description="Actin-1">
    <location>
        <begin position="2"/>
        <end position="377"/>
    </location>
</feature>
<feature type="modified residue" description="N-acetylalanine" evidence="2">
    <location>
        <position position="2"/>
    </location>
</feature>
<feature type="sequence conflict" description="In Ref. 1; AAA32727 and 2; U39449." evidence="3" ref="1 2">
    <original>F</original>
    <variation>L</variation>
    <location>
        <position position="354"/>
    </location>
</feature>
<name>ACT1_ARATH</name>
<evidence type="ECO:0000250" key="1">
    <source>
        <dbReference type="UniProtKB" id="P68137"/>
    </source>
</evidence>
<evidence type="ECO:0000250" key="2">
    <source>
        <dbReference type="UniProtKB" id="Q96292"/>
    </source>
</evidence>
<evidence type="ECO:0000305" key="3"/>
<organism>
    <name type="scientific">Arabidopsis thaliana</name>
    <name type="common">Mouse-ear cress</name>
    <dbReference type="NCBI Taxonomy" id="3702"/>
    <lineage>
        <taxon>Eukaryota</taxon>
        <taxon>Viridiplantae</taxon>
        <taxon>Streptophyta</taxon>
        <taxon>Embryophyta</taxon>
        <taxon>Tracheophyta</taxon>
        <taxon>Spermatophyta</taxon>
        <taxon>Magnoliopsida</taxon>
        <taxon>eudicotyledons</taxon>
        <taxon>Gunneridae</taxon>
        <taxon>Pentapetalae</taxon>
        <taxon>rosids</taxon>
        <taxon>malvids</taxon>
        <taxon>Brassicales</taxon>
        <taxon>Brassicaceae</taxon>
        <taxon>Camelineae</taxon>
        <taxon>Arabidopsis</taxon>
    </lineage>
</organism>
<reference key="1">
    <citation type="journal article" date="1988" name="Gene">
        <title>Nucleotide sequence of an actin gene from Arabidopsis thaliana.</title>
        <authorList>
            <person name="Nairn C.J."/>
            <person name="Winesett L."/>
            <person name="Ferl R.J."/>
        </authorList>
    </citation>
    <scope>NUCLEOTIDE SEQUENCE [GENOMIC DNA]</scope>
</reference>
<reference key="2">
    <citation type="journal article" date="1996" name="Plant Cell">
        <title>Conserved expression of the Arabidopsis ACT1 and ACT3 actin subclass in organ primordia and mature pollen.</title>
        <authorList>
            <person name="An Y.-Q."/>
            <person name="Huang S."/>
            <person name="McDowell J.M."/>
            <person name="McKinney E.C."/>
            <person name="Meagher R.B."/>
        </authorList>
    </citation>
    <scope>NUCLEOTIDE SEQUENCE [GENOMIC DNA]</scope>
    <source>
        <strain>cv. Columbia</strain>
    </source>
</reference>
<reference key="3">
    <citation type="journal article" date="1999" name="Nature">
        <title>Sequence and analysis of chromosome 2 of the plant Arabidopsis thaliana.</title>
        <authorList>
            <person name="Lin X."/>
            <person name="Kaul S."/>
            <person name="Rounsley S.D."/>
            <person name="Shea T.P."/>
            <person name="Benito M.-I."/>
            <person name="Town C.D."/>
            <person name="Fujii C.Y."/>
            <person name="Mason T.M."/>
            <person name="Bowman C.L."/>
            <person name="Barnstead M.E."/>
            <person name="Feldblyum T.V."/>
            <person name="Buell C.R."/>
            <person name="Ketchum K.A."/>
            <person name="Lee J.J."/>
            <person name="Ronning C.M."/>
            <person name="Koo H.L."/>
            <person name="Moffat K.S."/>
            <person name="Cronin L.A."/>
            <person name="Shen M."/>
            <person name="Pai G."/>
            <person name="Van Aken S."/>
            <person name="Umayam L."/>
            <person name="Tallon L.J."/>
            <person name="Gill J.E."/>
            <person name="Adams M.D."/>
            <person name="Carrera A.J."/>
            <person name="Creasy T.H."/>
            <person name="Goodman H.M."/>
            <person name="Somerville C.R."/>
            <person name="Copenhaver G.P."/>
            <person name="Preuss D."/>
            <person name="Nierman W.C."/>
            <person name="White O."/>
            <person name="Eisen J.A."/>
            <person name="Salzberg S.L."/>
            <person name="Fraser C.M."/>
            <person name="Venter J.C."/>
        </authorList>
    </citation>
    <scope>NUCLEOTIDE SEQUENCE [LARGE SCALE GENOMIC DNA]</scope>
    <source>
        <strain>cv. Columbia</strain>
    </source>
</reference>
<reference key="4">
    <citation type="journal article" date="2017" name="Plant J.">
        <title>Araport11: a complete reannotation of the Arabidopsis thaliana reference genome.</title>
        <authorList>
            <person name="Cheng C.Y."/>
            <person name="Krishnakumar V."/>
            <person name="Chan A.P."/>
            <person name="Thibaud-Nissen F."/>
            <person name="Schobel S."/>
            <person name="Town C.D."/>
        </authorList>
    </citation>
    <scope>GENOME REANNOTATION</scope>
    <source>
        <strain>cv. Columbia</strain>
    </source>
</reference>
<reference key="5">
    <citation type="journal article" date="2003" name="Science">
        <title>Empirical analysis of transcriptional activity in the Arabidopsis genome.</title>
        <authorList>
            <person name="Yamada K."/>
            <person name="Lim J."/>
            <person name="Dale J.M."/>
            <person name="Chen H."/>
            <person name="Shinn P."/>
            <person name="Palm C.J."/>
            <person name="Southwick A.M."/>
            <person name="Wu H.C."/>
            <person name="Kim C.J."/>
            <person name="Nguyen M."/>
            <person name="Pham P.K."/>
            <person name="Cheuk R.F."/>
            <person name="Karlin-Newmann G."/>
            <person name="Liu S.X."/>
            <person name="Lam B."/>
            <person name="Sakano H."/>
            <person name="Wu T."/>
            <person name="Yu G."/>
            <person name="Miranda M."/>
            <person name="Quach H.L."/>
            <person name="Tripp M."/>
            <person name="Chang C.H."/>
            <person name="Lee J.M."/>
            <person name="Toriumi M.J."/>
            <person name="Chan M.M."/>
            <person name="Tang C.C."/>
            <person name="Onodera C.S."/>
            <person name="Deng J.M."/>
            <person name="Akiyama K."/>
            <person name="Ansari Y."/>
            <person name="Arakawa T."/>
            <person name="Banh J."/>
            <person name="Banno F."/>
            <person name="Bowser L."/>
            <person name="Brooks S.Y."/>
            <person name="Carninci P."/>
            <person name="Chao Q."/>
            <person name="Choy N."/>
            <person name="Enju A."/>
            <person name="Goldsmith A.D."/>
            <person name="Gurjal M."/>
            <person name="Hansen N.F."/>
            <person name="Hayashizaki Y."/>
            <person name="Johnson-Hopson C."/>
            <person name="Hsuan V.W."/>
            <person name="Iida K."/>
            <person name="Karnes M."/>
            <person name="Khan S."/>
            <person name="Koesema E."/>
            <person name="Ishida J."/>
            <person name="Jiang P.X."/>
            <person name="Jones T."/>
            <person name="Kawai J."/>
            <person name="Kamiya A."/>
            <person name="Meyers C."/>
            <person name="Nakajima M."/>
            <person name="Narusaka M."/>
            <person name="Seki M."/>
            <person name="Sakurai T."/>
            <person name="Satou M."/>
            <person name="Tamse R."/>
            <person name="Vaysberg M."/>
            <person name="Wallender E.K."/>
            <person name="Wong C."/>
            <person name="Yamamura Y."/>
            <person name="Yuan S."/>
            <person name="Shinozaki K."/>
            <person name="Davis R.W."/>
            <person name="Theologis A."/>
            <person name="Ecker J.R."/>
        </authorList>
    </citation>
    <scope>NUCLEOTIDE SEQUENCE [LARGE SCALE MRNA]</scope>
    <source>
        <strain>cv. Columbia</strain>
    </source>
</reference>
<reference key="6">
    <citation type="journal article" date="1996" name="Genetics">
        <title>Structure and evolution of the actin gene family in Arabidopsis thaliana.</title>
        <authorList>
            <person name="McDowell J.M."/>
            <person name="Huang S."/>
            <person name="McKinney E.C."/>
            <person name="An Y.-Q."/>
            <person name="Meagher R.B."/>
        </authorList>
    </citation>
    <scope>GENE FAMILY ORGANIZATION</scope>
    <scope>CHARACTERIZATION</scope>
    <source>
        <strain>cv. Columbia</strain>
    </source>
</reference>
<keyword id="KW-0007">Acetylation</keyword>
<keyword id="KW-0067">ATP-binding</keyword>
<keyword id="KW-0963">Cytoplasm</keyword>
<keyword id="KW-0206">Cytoskeleton</keyword>
<keyword id="KW-0378">Hydrolase</keyword>
<keyword id="KW-0547">Nucleotide-binding</keyword>
<keyword id="KW-1185">Reference proteome</keyword>
<accession>P0CJ46</accession>
<accession>P10671</accession>
<accession>P53493</accession>
<accession>Q9M351</accession>
<comment type="function">
    <text>Actins are highly conserved proteins that are involved in various types of cell motility and are ubiquitously expressed in all eukaryotic cells. Essential component of cell cytoskeleton; plays an important role in cytoplasmic streaming, cell shape determination, cell division, organelle movement and extension growth. This is considered as one of the reproductive actins.</text>
</comment>
<comment type="catalytic activity">
    <reaction evidence="1">
        <text>ATP + H2O = ADP + phosphate + H(+)</text>
        <dbReference type="Rhea" id="RHEA:13065"/>
        <dbReference type="ChEBI" id="CHEBI:15377"/>
        <dbReference type="ChEBI" id="CHEBI:15378"/>
        <dbReference type="ChEBI" id="CHEBI:30616"/>
        <dbReference type="ChEBI" id="CHEBI:43474"/>
        <dbReference type="ChEBI" id="CHEBI:456216"/>
    </reaction>
</comment>
<comment type="subunit">
    <text>Polymerization of globular actin (G-actin) leads to a structural filament (F-actin) in the form of a two-stranded helix. The binding of profilin to monomeric G-actin cause the sequestration of actin into profilactin complexes, and prevents the polymerization.</text>
</comment>
<comment type="subcellular location">
    <subcellularLocation>
        <location>Cytoplasm</location>
        <location>Cytoskeleton</location>
    </subcellularLocation>
</comment>
<comment type="tissue specificity">
    <text>Preferentially expressed in mature pollen, pollen tubes, young embryo sac, and organ primordia. Little or no reproductive-gene expression is detected in vegetative organs, such as root, stems, leaves, sepals and petals.</text>
</comment>
<comment type="miscellaneous">
    <text>There are 8 actin genes in A.thaliana.</text>
</comment>
<comment type="similarity">
    <text evidence="3">Belongs to the actin family.</text>
</comment>
<comment type="sequence caution" evidence="3">
    <conflict type="erroneous gene model prediction">
        <sequence resource="EMBL-CDS" id="AAC23632"/>
    </conflict>
</comment>
<protein>
    <recommendedName>
        <fullName>Actin-1</fullName>
        <ecNumber evidence="1">3.6.4.-</ecNumber>
    </recommendedName>
</protein>
<dbReference type="EC" id="3.6.4.-" evidence="1"/>
<dbReference type="EMBL" id="M20016">
    <property type="protein sequence ID" value="AAA32727.1"/>
    <property type="molecule type" value="Genomic_DNA"/>
</dbReference>
<dbReference type="EMBL" id="U39449">
    <property type="status" value="NOT_ANNOTATED_CDS"/>
    <property type="molecule type" value="Genomic_DNA"/>
</dbReference>
<dbReference type="EMBL" id="AC004684">
    <property type="protein sequence ID" value="AAC23632.2"/>
    <property type="status" value="ALT_SEQ"/>
    <property type="molecule type" value="Genomic_DNA"/>
</dbReference>
<dbReference type="EMBL" id="CP002685">
    <property type="protein sequence ID" value="AEC09426.1"/>
    <property type="molecule type" value="Genomic_DNA"/>
</dbReference>
<dbReference type="EMBL" id="CP002685">
    <property type="protein sequence ID" value="AEC09427.1"/>
    <property type="molecule type" value="Genomic_DNA"/>
</dbReference>
<dbReference type="EMBL" id="CP002685">
    <property type="protein sequence ID" value="ANM62357.1"/>
    <property type="molecule type" value="Genomic_DNA"/>
</dbReference>
<dbReference type="EMBL" id="CP002685">
    <property type="protein sequence ID" value="ANM62358.1"/>
    <property type="molecule type" value="Genomic_DNA"/>
</dbReference>
<dbReference type="EMBL" id="AY074873">
    <property type="protein sequence ID" value="AAL75893.1"/>
    <property type="molecule type" value="mRNA"/>
</dbReference>
<dbReference type="EMBL" id="AY093784">
    <property type="protein sequence ID" value="AAM10400.1"/>
    <property type="molecule type" value="mRNA"/>
</dbReference>
<dbReference type="PIR" id="JA0066">
    <property type="entry name" value="ATMUM1"/>
</dbReference>
<dbReference type="RefSeq" id="NP_001031504.1">
    <property type="nucleotide sequence ID" value="NM_001036427.3"/>
</dbReference>
<dbReference type="RefSeq" id="NP_001324518.1">
    <property type="nucleotide sequence ID" value="NM_001336664.1"/>
</dbReference>
<dbReference type="RefSeq" id="NP_001324519.1">
    <property type="nucleotide sequence ID" value="NM_001336665.1"/>
</dbReference>
<dbReference type="RefSeq" id="NP_850284.1">
    <property type="nucleotide sequence ID" value="NM_179953.3"/>
</dbReference>
<dbReference type="SMR" id="P0CJ46"/>
<dbReference type="BioGRID" id="3683">
    <property type="interactions" value="8"/>
</dbReference>
<dbReference type="BioGRID" id="9859">
    <property type="interactions" value="2"/>
</dbReference>
<dbReference type="FunCoup" id="P0CJ46">
    <property type="interactions" value="2402"/>
</dbReference>
<dbReference type="IntAct" id="P0CJ46">
    <property type="interactions" value="6"/>
</dbReference>
<dbReference type="STRING" id="3702.P0CJ46"/>
<dbReference type="iPTMnet" id="P0CJ46"/>
<dbReference type="PaxDb" id="3702-AT2G37620.1"/>
<dbReference type="EnsemblPlants" id="AT2G37620.1">
    <property type="protein sequence ID" value="AT2G37620.1"/>
    <property type="gene ID" value="AT2G37620"/>
</dbReference>
<dbReference type="EnsemblPlants" id="AT2G37620.2">
    <property type="protein sequence ID" value="AT2G37620.2"/>
    <property type="gene ID" value="AT2G37620"/>
</dbReference>
<dbReference type="EnsemblPlants" id="AT2G37620.3">
    <property type="protein sequence ID" value="AT2G37620.3"/>
    <property type="gene ID" value="AT2G37620"/>
</dbReference>
<dbReference type="EnsemblPlants" id="AT2G37620.4">
    <property type="protein sequence ID" value="AT2G37620.4"/>
    <property type="gene ID" value="AT2G37620"/>
</dbReference>
<dbReference type="EnsemblPlants" id="AT3G53750.1">
    <property type="protein sequence ID" value="AT3G53750.1"/>
    <property type="gene ID" value="AT3G53750"/>
</dbReference>
<dbReference type="EnsemblPlants" id="AT3G53750.2">
    <property type="protein sequence ID" value="AT3G53750.2"/>
    <property type="gene ID" value="AT3G53750"/>
</dbReference>
<dbReference type="GeneID" id="818339"/>
<dbReference type="Gramene" id="AT2G37620.1">
    <property type="protein sequence ID" value="AT2G37620.1"/>
    <property type="gene ID" value="AT2G37620"/>
</dbReference>
<dbReference type="Gramene" id="AT2G37620.2">
    <property type="protein sequence ID" value="AT2G37620.2"/>
    <property type="gene ID" value="AT2G37620"/>
</dbReference>
<dbReference type="Gramene" id="AT2G37620.3">
    <property type="protein sequence ID" value="AT2G37620.3"/>
    <property type="gene ID" value="AT2G37620"/>
</dbReference>
<dbReference type="Gramene" id="AT2G37620.4">
    <property type="protein sequence ID" value="AT2G37620.4"/>
    <property type="gene ID" value="AT2G37620"/>
</dbReference>
<dbReference type="Gramene" id="AT3G53750.1">
    <property type="protein sequence ID" value="AT3G53750.1"/>
    <property type="gene ID" value="AT3G53750"/>
</dbReference>
<dbReference type="Gramene" id="AT3G53750.2">
    <property type="protein sequence ID" value="AT3G53750.2"/>
    <property type="gene ID" value="AT3G53750"/>
</dbReference>
<dbReference type="KEGG" id="ath:AT2G37620"/>
<dbReference type="KEGG" id="ath:AT3G53750"/>
<dbReference type="Araport" id="AT2G37620"/>
<dbReference type="TAIR" id="AT2G37620">
    <property type="gene designation" value="ACT1"/>
</dbReference>
<dbReference type="eggNOG" id="KOG0676">
    <property type="taxonomic scope" value="Eukaryota"/>
</dbReference>
<dbReference type="HOGENOM" id="CLU_027965_0_2_1"/>
<dbReference type="InParanoid" id="P0CJ46"/>
<dbReference type="OMA" id="CPENAGI"/>
<dbReference type="OrthoDB" id="1025403at2759"/>
<dbReference type="PhylomeDB" id="P0CJ46"/>
<dbReference type="PRO" id="PR:P0CJ46"/>
<dbReference type="Proteomes" id="UP000006548">
    <property type="component" value="Chromosome 2"/>
</dbReference>
<dbReference type="ExpressionAtlas" id="P0CJ46">
    <property type="expression patterns" value="baseline and differential"/>
</dbReference>
<dbReference type="GO" id="GO:0005856">
    <property type="term" value="C:cytoskeleton"/>
    <property type="evidence" value="ECO:0007669"/>
    <property type="project" value="UniProtKB-SubCell"/>
</dbReference>
<dbReference type="GO" id="GO:0005829">
    <property type="term" value="C:cytosol"/>
    <property type="evidence" value="ECO:0007005"/>
    <property type="project" value="TAIR"/>
</dbReference>
<dbReference type="GO" id="GO:0005783">
    <property type="term" value="C:endoplasmic reticulum"/>
    <property type="evidence" value="ECO:0007005"/>
    <property type="project" value="TAIR"/>
</dbReference>
<dbReference type="GO" id="GO:0009505">
    <property type="term" value="C:plant-type cell wall"/>
    <property type="evidence" value="ECO:0007005"/>
    <property type="project" value="TAIR"/>
</dbReference>
<dbReference type="GO" id="GO:0005886">
    <property type="term" value="C:plasma membrane"/>
    <property type="evidence" value="ECO:0007005"/>
    <property type="project" value="TAIR"/>
</dbReference>
<dbReference type="GO" id="GO:0009506">
    <property type="term" value="C:plasmodesma"/>
    <property type="evidence" value="ECO:0007005"/>
    <property type="project" value="TAIR"/>
</dbReference>
<dbReference type="GO" id="GO:0005524">
    <property type="term" value="F:ATP binding"/>
    <property type="evidence" value="ECO:0007669"/>
    <property type="project" value="UniProtKB-KW"/>
</dbReference>
<dbReference type="GO" id="GO:0016787">
    <property type="term" value="F:hydrolase activity"/>
    <property type="evidence" value="ECO:0007669"/>
    <property type="project" value="UniProtKB-KW"/>
</dbReference>
<dbReference type="GO" id="GO:0005200">
    <property type="term" value="F:structural constituent of cytoskeleton"/>
    <property type="evidence" value="ECO:0000250"/>
    <property type="project" value="TAIR"/>
</dbReference>
<dbReference type="GO" id="GO:0048589">
    <property type="term" value="P:developmental growth"/>
    <property type="evidence" value="ECO:0000315"/>
    <property type="project" value="TAIR"/>
</dbReference>
<dbReference type="GO" id="GO:0048767">
    <property type="term" value="P:root hair elongation"/>
    <property type="evidence" value="ECO:0000315"/>
    <property type="project" value="TAIR"/>
</dbReference>
<dbReference type="CDD" id="cd10224">
    <property type="entry name" value="ASKHA_NBD_actin"/>
    <property type="match status" value="1"/>
</dbReference>
<dbReference type="FunFam" id="3.30.420.40:FF:000291">
    <property type="entry name" value="Actin, alpha skeletal muscle"/>
    <property type="match status" value="1"/>
</dbReference>
<dbReference type="FunFam" id="3.90.640.10:FF:000001">
    <property type="entry name" value="Actin, muscle"/>
    <property type="match status" value="1"/>
</dbReference>
<dbReference type="FunFam" id="3.30.420.40:FF:000404">
    <property type="entry name" value="Major actin"/>
    <property type="match status" value="1"/>
</dbReference>
<dbReference type="FunFam" id="3.30.420.40:FF:000058">
    <property type="entry name" value="Putative actin-related protein 5"/>
    <property type="match status" value="1"/>
</dbReference>
<dbReference type="Gene3D" id="3.30.420.40">
    <property type="match status" value="2"/>
</dbReference>
<dbReference type="Gene3D" id="3.90.640.10">
    <property type="entry name" value="Actin, Chain A, domain 4"/>
    <property type="match status" value="1"/>
</dbReference>
<dbReference type="InterPro" id="IPR004000">
    <property type="entry name" value="Actin"/>
</dbReference>
<dbReference type="InterPro" id="IPR020902">
    <property type="entry name" value="Actin/actin-like_CS"/>
</dbReference>
<dbReference type="InterPro" id="IPR004001">
    <property type="entry name" value="Actin_CS"/>
</dbReference>
<dbReference type="InterPro" id="IPR043129">
    <property type="entry name" value="ATPase_NBD"/>
</dbReference>
<dbReference type="PANTHER" id="PTHR11937">
    <property type="entry name" value="ACTIN"/>
    <property type="match status" value="1"/>
</dbReference>
<dbReference type="Pfam" id="PF00022">
    <property type="entry name" value="Actin"/>
    <property type="match status" value="1"/>
</dbReference>
<dbReference type="PRINTS" id="PR00190">
    <property type="entry name" value="ACTIN"/>
</dbReference>
<dbReference type="SMART" id="SM00268">
    <property type="entry name" value="ACTIN"/>
    <property type="match status" value="1"/>
</dbReference>
<dbReference type="SUPFAM" id="SSF53067">
    <property type="entry name" value="Actin-like ATPase domain"/>
    <property type="match status" value="2"/>
</dbReference>
<dbReference type="PROSITE" id="PS00406">
    <property type="entry name" value="ACTINS_1"/>
    <property type="match status" value="1"/>
</dbReference>
<dbReference type="PROSITE" id="PS00432">
    <property type="entry name" value="ACTINS_2"/>
    <property type="match status" value="1"/>
</dbReference>
<dbReference type="PROSITE" id="PS01132">
    <property type="entry name" value="ACTINS_ACT_LIKE"/>
    <property type="match status" value="1"/>
</dbReference>
<proteinExistence type="evidence at protein level"/>